<protein>
    <recommendedName>
        <fullName>Protein U84</fullName>
    </recommendedName>
</protein>
<name>VU84_HHV6U</name>
<feature type="chain" id="PRO_0000116329" description="Protein U84">
    <location>
        <begin position="1"/>
        <end position="342"/>
    </location>
</feature>
<feature type="region of interest" description="Disordered" evidence="1">
    <location>
        <begin position="1"/>
        <end position="33"/>
    </location>
</feature>
<feature type="compositionally biased region" description="Basic residues" evidence="1">
    <location>
        <begin position="14"/>
        <end position="25"/>
    </location>
</feature>
<sequence>MKDRGNKNTSKTRQTVKSRRTRKTTKQFVERKKNLSAKTTIRNNRLQNNLSPQTTPTEKPVDYATARVFPQHTPYDIKFNKEKYRNNEIYAYSKLRKISNAVFRQEKEINRLTVFTDKPLADLSFKMPVNTSTTEKKEIVRSTECQRQDRNTVNAFKIFQSYETSPPYSPCSPKNFMSEIYRLFRCYNASIVQIQVYSRNKILINAMQEKLMSIGNMVINVGEQIISESVHHEPVVAIAINQFFRGTVPQTDALRKNAVTPIPVNASKKKLVGICSLMINAPTEKDLLCAAHVCINFAICYPNEITLNIAKLTQPMLLQEHITIYNSFNKYIYWDDYGKLLN</sequence>
<gene>
    <name type="primary">U84</name>
    <name type="synonym">EDLF2</name>
</gene>
<evidence type="ECO:0000256" key="1">
    <source>
        <dbReference type="SAM" id="MobiDB-lite"/>
    </source>
</evidence>
<evidence type="ECO:0000305" key="2"/>
<accession>P52532</accession>
<organism>
    <name type="scientific">Human herpesvirus 6A (strain Uganda-1102)</name>
    <name type="common">HHV-6 variant A</name>
    <name type="synonym">Human B lymphotropic virus</name>
    <dbReference type="NCBI Taxonomy" id="10370"/>
    <lineage>
        <taxon>Viruses</taxon>
        <taxon>Duplodnaviria</taxon>
        <taxon>Heunggongvirae</taxon>
        <taxon>Peploviricota</taxon>
        <taxon>Herviviricetes</taxon>
        <taxon>Herpesvirales</taxon>
        <taxon>Orthoherpesviridae</taxon>
        <taxon>Betaherpesvirinae</taxon>
        <taxon>Roseolovirus</taxon>
        <taxon>Roseolovirus humanbeta6a</taxon>
        <taxon>Human betaherpesvirus 6A</taxon>
    </lineage>
</organism>
<reference key="1">
    <citation type="journal article" date="1994" name="Virology">
        <title>Nucleotide sequence analysis of a 21-kbp region of the genome of human herpesvirus-6 containing homologues of human cytomegalovirus major immediate-early and replication genes.</title>
        <authorList>
            <person name="Nicholas J."/>
        </authorList>
    </citation>
    <scope>NUCLEOTIDE SEQUENCE [GENOMIC DNA]</scope>
</reference>
<reference key="2">
    <citation type="journal article" date="1995" name="Virology">
        <title>The DNA sequence of human herpesvirus-6: structure, coding content, and genome evolution.</title>
        <authorList>
            <person name="Gompels U.A."/>
            <person name="Nicholas J."/>
            <person name="Lawrence G.L."/>
            <person name="Jones M."/>
            <person name="Thomson B.J."/>
            <person name="Martin M.E.D."/>
            <person name="Efstathiou S."/>
            <person name="Craxton M.A."/>
            <person name="Macaulay H.A."/>
        </authorList>
    </citation>
    <scope>NUCLEOTIDE SEQUENCE [LARGE SCALE GENOMIC DNA]</scope>
</reference>
<keyword id="KW-1185">Reference proteome</keyword>
<proteinExistence type="inferred from homology"/>
<comment type="similarity">
    <text evidence="2">Belongs to the herpesviridae U84 family.</text>
</comment>
<organismHost>
    <name type="scientific">Homo sapiens</name>
    <name type="common">Human</name>
    <dbReference type="NCBI Taxonomy" id="9606"/>
</organismHost>
<dbReference type="EMBL" id="U13194">
    <property type="protein sequence ID" value="AAA68475.1"/>
    <property type="molecule type" value="Genomic_DNA"/>
</dbReference>
<dbReference type="EMBL" id="X83413">
    <property type="protein sequence ID" value="CAA58333.1"/>
    <property type="molecule type" value="Genomic_DNA"/>
</dbReference>
<dbReference type="RefSeq" id="NP_042977.1">
    <property type="nucleotide sequence ID" value="NC_001664.2"/>
</dbReference>
<dbReference type="DNASU" id="1487964"/>
<dbReference type="GeneID" id="1487964"/>
<dbReference type="KEGG" id="vg:1487964"/>
<dbReference type="Proteomes" id="UP000009295">
    <property type="component" value="Segment"/>
</dbReference>
<dbReference type="GO" id="GO:0006355">
    <property type="term" value="P:regulation of DNA-templated transcription"/>
    <property type="evidence" value="ECO:0007669"/>
    <property type="project" value="InterPro"/>
</dbReference>
<dbReference type="InterPro" id="IPR005028">
    <property type="entry name" value="Herpes_IE2_3"/>
</dbReference>
<dbReference type="Pfam" id="PF03361">
    <property type="entry name" value="Herpes_IE2_3"/>
    <property type="match status" value="1"/>
</dbReference>